<accession>P27795</accession>
<protein>
    <recommendedName>
        <fullName>Histone H2B</fullName>
    </recommendedName>
</protein>
<organism>
    <name type="scientific">Trypanosoma cruzi</name>
    <dbReference type="NCBI Taxonomy" id="5693"/>
    <lineage>
        <taxon>Eukaryota</taxon>
        <taxon>Discoba</taxon>
        <taxon>Euglenozoa</taxon>
        <taxon>Kinetoplastea</taxon>
        <taxon>Metakinetoplastina</taxon>
        <taxon>Trypanosomatida</taxon>
        <taxon>Trypanosomatidae</taxon>
        <taxon>Trypanosoma</taxon>
        <taxon>Schizotrypanum</taxon>
    </lineage>
</organism>
<comment type="function">
    <text>Core component of nucleosome. Nucleosomes wrap and compact DNA into chromatin, limiting DNA accessibility to the cellular machineries which require DNA as a template. Histones thereby play a central role in transcription regulation, DNA repair, DNA replication and chromosomal stability. DNA accessibility is regulated via a complex set of post-translational modifications of histones, also called histone code, and nucleosome remodeling.</text>
</comment>
<comment type="subunit">
    <text>The nucleosome is a histone octamer containing two molecules each of H2A, H2B, H3 and H4 assembled in one H3-H4 heterotetramer and two H2A-H2B heterodimers. The octamer wraps approximately 147 bp of DNA.</text>
</comment>
<comment type="subcellular location">
    <subcellularLocation>
        <location>Nucleus</location>
    </subcellularLocation>
    <subcellularLocation>
        <location>Chromosome</location>
    </subcellularLocation>
</comment>
<comment type="similarity">
    <text evidence="2">Belongs to the histone H2B family.</text>
</comment>
<proteinExistence type="inferred from homology"/>
<evidence type="ECO:0000256" key="1">
    <source>
        <dbReference type="SAM" id="MobiDB-lite"/>
    </source>
</evidence>
<evidence type="ECO:0000305" key="2"/>
<sequence>MATPKSSSANRKKGGKKSHRKPKRTWNVYINRSLKSINNHMSMSGRTMKIVNSFVNDLFERIACEAATVVRVNKKRTLGARELQTAVRLVLPADLAKHAMAEGTKAVSHASS</sequence>
<dbReference type="EMBL" id="X60982">
    <property type="protein sequence ID" value="CAA43297.1"/>
    <property type="molecule type" value="Genomic_DNA"/>
</dbReference>
<dbReference type="PIR" id="S54703">
    <property type="entry name" value="S15721"/>
</dbReference>
<dbReference type="SMR" id="P27795"/>
<dbReference type="VEuPathDB" id="TriTrypDB:BCY84_11027"/>
<dbReference type="VEuPathDB" id="TriTrypDB:C3747_167g53"/>
<dbReference type="VEuPathDB" id="TriTrypDB:C4B63_303g6"/>
<dbReference type="VEuPathDB" id="TriTrypDB:TcBrA4_0042330"/>
<dbReference type="VEuPathDB" id="TriTrypDB:TcCL_Unassigned06095"/>
<dbReference type="VEuPathDB" id="TriTrypDB:TcCLB.506779.150"/>
<dbReference type="VEuPathDB" id="TriTrypDB:TcCLB.511635.10"/>
<dbReference type="VEuPathDB" id="TriTrypDB:TCDM_14237"/>
<dbReference type="VEuPathDB" id="TriTrypDB:TcG_08085"/>
<dbReference type="VEuPathDB" id="TriTrypDB:TcYC6_0044700"/>
<dbReference type="GO" id="GO:0000786">
    <property type="term" value="C:nucleosome"/>
    <property type="evidence" value="ECO:0007669"/>
    <property type="project" value="UniProtKB-KW"/>
</dbReference>
<dbReference type="GO" id="GO:0005634">
    <property type="term" value="C:nucleus"/>
    <property type="evidence" value="ECO:0007669"/>
    <property type="project" value="UniProtKB-SubCell"/>
</dbReference>
<dbReference type="GO" id="GO:0003677">
    <property type="term" value="F:DNA binding"/>
    <property type="evidence" value="ECO:0007669"/>
    <property type="project" value="UniProtKB-KW"/>
</dbReference>
<dbReference type="GO" id="GO:0046982">
    <property type="term" value="F:protein heterodimerization activity"/>
    <property type="evidence" value="ECO:0007669"/>
    <property type="project" value="InterPro"/>
</dbReference>
<dbReference type="GO" id="GO:0030527">
    <property type="term" value="F:structural constituent of chromatin"/>
    <property type="evidence" value="ECO:0007669"/>
    <property type="project" value="InterPro"/>
</dbReference>
<dbReference type="CDD" id="cd22910">
    <property type="entry name" value="HFD_H2B"/>
    <property type="match status" value="1"/>
</dbReference>
<dbReference type="FunFam" id="1.10.20.10:FF:000043">
    <property type="entry name" value="Histone H2B"/>
    <property type="match status" value="1"/>
</dbReference>
<dbReference type="Gene3D" id="1.10.20.10">
    <property type="entry name" value="Histone, subunit A"/>
    <property type="match status" value="1"/>
</dbReference>
<dbReference type="InterPro" id="IPR009072">
    <property type="entry name" value="Histone-fold"/>
</dbReference>
<dbReference type="InterPro" id="IPR007125">
    <property type="entry name" value="Histone_H2A/H2B/H3"/>
</dbReference>
<dbReference type="InterPro" id="IPR000558">
    <property type="entry name" value="Histone_H2B"/>
</dbReference>
<dbReference type="InterPro" id="IPR055333">
    <property type="entry name" value="HISTONE_H2B_site"/>
</dbReference>
<dbReference type="PANTHER" id="PTHR23428">
    <property type="entry name" value="HISTONE H2B"/>
    <property type="match status" value="1"/>
</dbReference>
<dbReference type="Pfam" id="PF00125">
    <property type="entry name" value="Histone"/>
    <property type="match status" value="1"/>
</dbReference>
<dbReference type="PRINTS" id="PR00621">
    <property type="entry name" value="HISTONEH2B"/>
</dbReference>
<dbReference type="SMART" id="SM00427">
    <property type="entry name" value="H2B"/>
    <property type="match status" value="1"/>
</dbReference>
<dbReference type="SUPFAM" id="SSF47113">
    <property type="entry name" value="Histone-fold"/>
    <property type="match status" value="1"/>
</dbReference>
<dbReference type="PROSITE" id="PS00357">
    <property type="entry name" value="HISTONE_H2B"/>
    <property type="match status" value="1"/>
</dbReference>
<name>H2B_TRYCR</name>
<reference key="1">
    <citation type="journal article" date="1994" name="Mol. Microbiol.">
        <title>Molecular characterization and transcription of the histone H2B gene from the protozoan parasite Trypanosoma cruzi.</title>
        <authorList>
            <person name="Garcia-Salcedo J.A."/>
            <person name="Oliver J.L."/>
            <person name="Stock R.P."/>
            <person name="Gonzalez A."/>
        </authorList>
    </citation>
    <scope>NUCLEOTIDE SEQUENCE [GENOMIC DNA]</scope>
    <source>
        <strain>Y</strain>
    </source>
</reference>
<feature type="chain" id="PRO_0000071907" description="Histone H2B">
    <location>
        <begin position="1"/>
        <end position="112"/>
    </location>
</feature>
<feature type="region of interest" description="Disordered" evidence="1">
    <location>
        <begin position="1"/>
        <end position="24"/>
    </location>
</feature>
<feature type="compositionally biased region" description="Basic residues" evidence="1">
    <location>
        <begin position="10"/>
        <end position="24"/>
    </location>
</feature>
<keyword id="KW-0158">Chromosome</keyword>
<keyword id="KW-0238">DNA-binding</keyword>
<keyword id="KW-0544">Nucleosome core</keyword>
<keyword id="KW-0539">Nucleus</keyword>